<dbReference type="EC" id="3.1.-.-"/>
<dbReference type="EMBL" id="CR860324">
    <property type="protein sequence ID" value="CAH92461.1"/>
    <property type="molecule type" value="mRNA"/>
</dbReference>
<dbReference type="RefSeq" id="NP_001126451.1">
    <property type="nucleotide sequence ID" value="NM_001132979.1"/>
</dbReference>
<dbReference type="SMR" id="Q5R6Z9"/>
<dbReference type="FunCoup" id="Q5R6Z9">
    <property type="interactions" value="1456"/>
</dbReference>
<dbReference type="STRING" id="9601.ENSPPYP00000002445"/>
<dbReference type="GeneID" id="100173437"/>
<dbReference type="KEGG" id="pon:100173437"/>
<dbReference type="CTD" id="64421"/>
<dbReference type="eggNOG" id="KOG1361">
    <property type="taxonomic scope" value="Eukaryota"/>
</dbReference>
<dbReference type="InParanoid" id="Q5R6Z9"/>
<dbReference type="OrthoDB" id="262529at2759"/>
<dbReference type="Proteomes" id="UP000001595">
    <property type="component" value="Unplaced"/>
</dbReference>
<dbReference type="GO" id="GO:0070419">
    <property type="term" value="C:nonhomologous end joining complex"/>
    <property type="evidence" value="ECO:0000250"/>
    <property type="project" value="UniProtKB"/>
</dbReference>
<dbReference type="GO" id="GO:0005634">
    <property type="term" value="C:nucleus"/>
    <property type="evidence" value="ECO:0007669"/>
    <property type="project" value="UniProtKB-SubCell"/>
</dbReference>
<dbReference type="GO" id="GO:0035312">
    <property type="term" value="F:5'-3' DNA exonuclease activity"/>
    <property type="evidence" value="ECO:0007669"/>
    <property type="project" value="TreeGrafter"/>
</dbReference>
<dbReference type="GO" id="GO:0003684">
    <property type="term" value="F:damaged DNA binding"/>
    <property type="evidence" value="ECO:0007669"/>
    <property type="project" value="TreeGrafter"/>
</dbReference>
<dbReference type="GO" id="GO:0004519">
    <property type="term" value="F:endonuclease activity"/>
    <property type="evidence" value="ECO:0007669"/>
    <property type="project" value="UniProtKB-KW"/>
</dbReference>
<dbReference type="GO" id="GO:0002250">
    <property type="term" value="P:adaptive immune response"/>
    <property type="evidence" value="ECO:0007669"/>
    <property type="project" value="UniProtKB-KW"/>
</dbReference>
<dbReference type="GO" id="GO:0006310">
    <property type="term" value="P:DNA recombination"/>
    <property type="evidence" value="ECO:0007669"/>
    <property type="project" value="UniProtKB-KW"/>
</dbReference>
<dbReference type="GO" id="GO:0006303">
    <property type="term" value="P:double-strand break repair via nonhomologous end joining"/>
    <property type="evidence" value="ECO:0007669"/>
    <property type="project" value="TreeGrafter"/>
</dbReference>
<dbReference type="GO" id="GO:0036297">
    <property type="term" value="P:interstrand cross-link repair"/>
    <property type="evidence" value="ECO:0007669"/>
    <property type="project" value="TreeGrafter"/>
</dbReference>
<dbReference type="GO" id="GO:0000723">
    <property type="term" value="P:telomere maintenance"/>
    <property type="evidence" value="ECO:0007669"/>
    <property type="project" value="TreeGrafter"/>
</dbReference>
<dbReference type="CDD" id="cd16297">
    <property type="entry name" value="artemis-SNM1C-like_MBL-fold"/>
    <property type="match status" value="1"/>
</dbReference>
<dbReference type="FunFam" id="3.40.50.12650:FF:000002">
    <property type="entry name" value="DNA cross-link repair 1C"/>
    <property type="match status" value="1"/>
</dbReference>
<dbReference type="FunFam" id="3.60.15.10:FF:000018">
    <property type="entry name" value="DNA cross-link repair 1C"/>
    <property type="match status" value="1"/>
</dbReference>
<dbReference type="Gene3D" id="3.40.50.12650">
    <property type="match status" value="1"/>
</dbReference>
<dbReference type="Gene3D" id="3.60.15.10">
    <property type="entry name" value="Ribonuclease Z/Hydroxyacylglutathione hydrolase-like"/>
    <property type="match status" value="1"/>
</dbReference>
<dbReference type="InterPro" id="IPR011084">
    <property type="entry name" value="DRMBL"/>
</dbReference>
<dbReference type="InterPro" id="IPR036866">
    <property type="entry name" value="RibonucZ/Hydroxyglut_hydro"/>
</dbReference>
<dbReference type="PANTHER" id="PTHR23240">
    <property type="entry name" value="DNA CROSS-LINK REPAIR PROTEIN PSO2/SNM1-RELATED"/>
    <property type="match status" value="1"/>
</dbReference>
<dbReference type="PANTHER" id="PTHR23240:SF8">
    <property type="entry name" value="PROTEIN ARTEMIS"/>
    <property type="match status" value="1"/>
</dbReference>
<dbReference type="Pfam" id="PF07522">
    <property type="entry name" value="DRMBL"/>
    <property type="match status" value="1"/>
</dbReference>
<dbReference type="SUPFAM" id="SSF56281">
    <property type="entry name" value="Metallo-hydrolase/oxidoreductase"/>
    <property type="match status" value="1"/>
</dbReference>
<sequence length="692" mass="78624">MSSFEGQMAEYPTISIDRFDRENLRARAYFLSHCHKDHMKGLRAPTLKRRLECSLKVYLYCSPVTKELLLTSPKYRFWKKRIISIEIETPTQISLVDEASGEKEEIVVTLLPAGHCPGSVMFLFQGNNGTVLYTGDFRLAQGEAARMELLHSGGRIKDIQSVYLDTTFCDPRFYQIPSREECLSGILELVRSWITRSPYHVVWLNCKAAYGYEYLFTNLSEELGVQVHVNKLDMFRNMPEILHHLTTDRNTQIHACRHPKAEEYFQWSKLPCGITSRNRIPLHIISIKPSTMWFGERSRKTNVIVRTGESSYRACFSFHSSYSEIKDFLSYLCPVNAYPNVIPVGTTMDKVVEILKPLCRSSQSMEPKYKPLGKLKRARTVHRDSEEEDDYLFDDPLPIPLRHKVPYQETLHPEVFSMTVVSEKQPEKLRQTPGCCRAESMQSSRFTNFVDCEESNSESEEEVGIPASLQGDLGSVLHLQKADGDVPQWKVFFKRNDEITDERLENFPSSTEAGGSQSPKLFSDSDGESTHISSQNSSQSTHITEQGSQGWDSQSDTVLLSSQERNSGDITSLDKVDYRPTIKENIPASLMEQNVICPKHTYSDLKSRDQDVTVVPSTGEPTTLSSETHIPEEKSLLNLSTNADSQSSSDFEVPSTPEAELPKREHLQYLYEKLATGESIAVKKRKCSLSDI</sequence>
<evidence type="ECO:0000250" key="1"/>
<evidence type="ECO:0000250" key="2">
    <source>
        <dbReference type="UniProtKB" id="Q8K4J0"/>
    </source>
</evidence>
<evidence type="ECO:0000250" key="3">
    <source>
        <dbReference type="UniProtKB" id="Q96SD1"/>
    </source>
</evidence>
<evidence type="ECO:0000256" key="4">
    <source>
        <dbReference type="SAM" id="MobiDB-lite"/>
    </source>
</evidence>
<evidence type="ECO:0000305" key="5"/>
<accession>Q5R6Z9</accession>
<organism>
    <name type="scientific">Pongo abelii</name>
    <name type="common">Sumatran orangutan</name>
    <name type="synonym">Pongo pygmaeus abelii</name>
    <dbReference type="NCBI Taxonomy" id="9601"/>
    <lineage>
        <taxon>Eukaryota</taxon>
        <taxon>Metazoa</taxon>
        <taxon>Chordata</taxon>
        <taxon>Craniata</taxon>
        <taxon>Vertebrata</taxon>
        <taxon>Euteleostomi</taxon>
        <taxon>Mammalia</taxon>
        <taxon>Eutheria</taxon>
        <taxon>Euarchontoglires</taxon>
        <taxon>Primates</taxon>
        <taxon>Haplorrhini</taxon>
        <taxon>Catarrhini</taxon>
        <taxon>Hominidae</taxon>
        <taxon>Pongo</taxon>
    </lineage>
</organism>
<name>DCR1C_PONAB</name>
<keyword id="KW-1064">Adaptive immunity</keyword>
<keyword id="KW-0227">DNA damage</keyword>
<keyword id="KW-0233">DNA recombination</keyword>
<keyword id="KW-0234">DNA repair</keyword>
<keyword id="KW-0255">Endonuclease</keyword>
<keyword id="KW-0269">Exonuclease</keyword>
<keyword id="KW-0378">Hydrolase</keyword>
<keyword id="KW-0391">Immunity</keyword>
<keyword id="KW-0460">Magnesium</keyword>
<keyword id="KW-0540">Nuclease</keyword>
<keyword id="KW-0539">Nucleus</keyword>
<keyword id="KW-0597">Phosphoprotein</keyword>
<keyword id="KW-1185">Reference proteome</keyword>
<comment type="function">
    <text evidence="1">Required for V(D)J recombination, the process by which exons encoding the antigen-binding domains of immunoglobulins and T-cell receptor proteins are assembled from individual V, (D), and J gene segments. V(D)J recombination is initiated by the lymphoid specific RAG endonuclease complex, which generates site specific DNA double strand breaks (DSBs). These DSBs present two types of DNA end structures: hairpin sealed coding ends and phosphorylated blunt signal ends. These ends are independently repaired by the non homologous end joining (NHEJ) pathway to form coding and signal joints respectively. This protein exhibits single-strand specific 5'-3' exonuclease activity in isolation, and acquires endonucleolytic activity on 5' and 3' hairpins and overhangs when in a complex with PRKDC. The latter activity is required specifically for the resolution of closed hairpins prior to the formation of the coding joint. May also be required for the repair of complex DSBs induced by ionizing radiation, which require substantial end-processing prior to religation by NHEJ (By similarity).</text>
</comment>
<comment type="subunit">
    <text evidence="3">Interacts with LIG4; the interaction is direct. Interacts with ATM. Interacts with BRCA1. Interacts with PRKDC. Interacts with TP53BP1. Also exhibits ATM- and phosphorylation-dependent interaction with the MRN complex, composed of MRE11, RAD50, and NBN.</text>
</comment>
<comment type="subcellular location">
    <subcellularLocation>
        <location evidence="1">Nucleus</location>
    </subcellularLocation>
</comment>
<comment type="PTM">
    <text evidence="1">Phosphorylation on undefined residues by PRKDC may stimulate endonucleolytic activity on 5' and 3' hairpins and overhangs. PRKDC must remain present, even after phosphorylation, for efficient hairpin opening. Also phosphorylated by ATM in response to ionizing radiation (IR) and by ATR in response to ultraviolet (UV) radiation (By similarity).</text>
</comment>
<comment type="similarity">
    <text evidence="5">Belongs to the DNA repair metallo-beta-lactamase (DRMBL) family.</text>
</comment>
<proteinExistence type="evidence at transcript level"/>
<protein>
    <recommendedName>
        <fullName>Protein artemis</fullName>
        <ecNumber>3.1.-.-</ecNumber>
    </recommendedName>
    <alternativeName>
        <fullName>DNA cross-link repair 1C protein</fullName>
    </alternativeName>
</protein>
<feature type="chain" id="PRO_0000209123" description="Protein artemis">
    <location>
        <begin position="1"/>
        <end position="692"/>
    </location>
</feature>
<feature type="region of interest" description="Disordered" evidence="4">
    <location>
        <begin position="503"/>
        <end position="555"/>
    </location>
</feature>
<feature type="region of interest" description="Disordered" evidence="4">
    <location>
        <begin position="640"/>
        <end position="660"/>
    </location>
</feature>
<feature type="compositionally biased region" description="Polar residues" evidence="4">
    <location>
        <begin position="507"/>
        <end position="520"/>
    </location>
</feature>
<feature type="compositionally biased region" description="Low complexity" evidence="4">
    <location>
        <begin position="530"/>
        <end position="543"/>
    </location>
</feature>
<feature type="compositionally biased region" description="Polar residues" evidence="4">
    <location>
        <begin position="544"/>
        <end position="555"/>
    </location>
</feature>
<feature type="compositionally biased region" description="Polar residues" evidence="4">
    <location>
        <begin position="640"/>
        <end position="650"/>
    </location>
</feature>
<feature type="modified residue" description="Phosphothreonine" evidence="2">
    <location>
        <position position="380"/>
    </location>
</feature>
<feature type="modified residue" description="Phosphoserine" evidence="2">
    <location>
        <position position="385"/>
    </location>
</feature>
<feature type="modified residue" description="Phosphoserine; by ATM" evidence="3">
    <location>
        <position position="645"/>
    </location>
</feature>
<gene>
    <name type="primary">DCLRE1C</name>
</gene>
<reference key="1">
    <citation type="submission" date="2004-11" db="EMBL/GenBank/DDBJ databases">
        <authorList>
            <consortium name="The German cDNA consortium"/>
        </authorList>
    </citation>
    <scope>NUCLEOTIDE SEQUENCE [LARGE SCALE MRNA]</scope>
    <source>
        <tissue>Brain cortex</tissue>
    </source>
</reference>